<dbReference type="EMBL" id="AF126243">
    <property type="protein sequence ID" value="AAD39138.1"/>
    <property type="molecule type" value="mRNA"/>
</dbReference>
<dbReference type="GO" id="GO:0005615">
    <property type="term" value="C:extracellular space"/>
    <property type="evidence" value="ECO:0007669"/>
    <property type="project" value="TreeGrafter"/>
</dbReference>
<dbReference type="GO" id="GO:0005179">
    <property type="term" value="F:hormone activity"/>
    <property type="evidence" value="ECO:0007669"/>
    <property type="project" value="UniProtKB-KW"/>
</dbReference>
<dbReference type="GO" id="GO:0030334">
    <property type="term" value="P:regulation of cell migration"/>
    <property type="evidence" value="ECO:0007669"/>
    <property type="project" value="TreeGrafter"/>
</dbReference>
<dbReference type="InterPro" id="IPR004250">
    <property type="entry name" value="Somatostatin"/>
</dbReference>
<dbReference type="InterPro" id="IPR018142">
    <property type="entry name" value="Somatostatin/Cortistatin_C"/>
</dbReference>
<dbReference type="PANTHER" id="PTHR10558">
    <property type="entry name" value="SOMATOSTATIN"/>
    <property type="match status" value="1"/>
</dbReference>
<dbReference type="PANTHER" id="PTHR10558:SF2">
    <property type="entry name" value="SOMATOSTATIN"/>
    <property type="match status" value="1"/>
</dbReference>
<dbReference type="Pfam" id="PF03002">
    <property type="entry name" value="Somatostatin"/>
    <property type="match status" value="1"/>
</dbReference>
<dbReference type="PIRSF" id="PIRSF001814">
    <property type="entry name" value="Somatostatin"/>
    <property type="match status" value="1"/>
</dbReference>
<comment type="function">
    <text>Somatostatin inhibits the release of somatotropin.</text>
</comment>
<comment type="subcellular location">
    <subcellularLocation>
        <location>Secreted</location>
    </subcellularLocation>
</comment>
<comment type="similarity">
    <text evidence="4">Belongs to the somatostatin family.</text>
</comment>
<sequence>MLSCRFQCALVLLSLAVVFSKVSAAPSDLRLRQLLQRSLAAAAGKQELTKYSLAELLSELAQSENDALDSSDLSRGADQDEVRLELDRSANSSPLAARERKAGCKNFFWKTFTSC</sequence>
<accession>Q9W7F0</accession>
<keyword id="KW-0165">Cleavage on pair of basic residues</keyword>
<keyword id="KW-1015">Disulfide bond</keyword>
<keyword id="KW-0372">Hormone</keyword>
<keyword id="KW-0964">Secreted</keyword>
<keyword id="KW-0732">Signal</keyword>
<protein>
    <recommendedName>
        <fullName>Somatostatin-1</fullName>
    </recommendedName>
    <alternativeName>
        <fullName>PSS1</fullName>
    </alternativeName>
    <alternativeName>
        <fullName>Somatostatin I</fullName>
    </alternativeName>
    <component>
        <recommendedName>
            <fullName>Somatostatin-27</fullName>
        </recommendedName>
    </component>
    <component>
        <recommendedName>
            <fullName>Somatostatin-14</fullName>
        </recommendedName>
    </component>
</protein>
<name>SMS1_PROAN</name>
<feature type="signal peptide" evidence="2">
    <location>
        <begin position="1"/>
        <end position="24"/>
    </location>
</feature>
<feature type="propeptide" id="PRO_0000033148" evidence="2">
    <location>
        <begin position="25"/>
        <end position="88"/>
    </location>
</feature>
<feature type="peptide" id="PRO_0000033149" description="Somatostatin-27" evidence="2">
    <location>
        <begin position="89"/>
        <end position="115"/>
    </location>
</feature>
<feature type="peptide" id="PRO_0000033150" description="Somatostatin-14">
    <location>
        <begin position="102"/>
        <end position="115"/>
    </location>
</feature>
<feature type="region of interest" description="Disordered" evidence="3">
    <location>
        <begin position="65"/>
        <end position="95"/>
    </location>
</feature>
<feature type="compositionally biased region" description="Basic and acidic residues" evidence="3">
    <location>
        <begin position="75"/>
        <end position="88"/>
    </location>
</feature>
<feature type="disulfide bond" evidence="1">
    <location>
        <begin position="104"/>
        <end position="115"/>
    </location>
</feature>
<reference key="1">
    <citation type="journal article" date="1999" name="J. Comp. Neurol.">
        <title>Molecular cloning of the cDNAs and distribution of the mRNAs encoding two somatostatin precursors in the African lungfish Protopterus annectens.</title>
        <authorList>
            <person name="Trabucchi M."/>
            <person name="Tostivint H."/>
            <person name="Lihrmann I."/>
            <person name="Jegou S."/>
            <person name="Vallarino M."/>
            <person name="Vaudry H."/>
        </authorList>
    </citation>
    <scope>NUCLEOTIDE SEQUENCE [MRNA]</scope>
    <source>
        <tissue>Brain</tissue>
    </source>
</reference>
<proteinExistence type="inferred from homology"/>
<evidence type="ECO:0000250" key="1"/>
<evidence type="ECO:0000255" key="2"/>
<evidence type="ECO:0000256" key="3">
    <source>
        <dbReference type="SAM" id="MobiDB-lite"/>
    </source>
</evidence>
<evidence type="ECO:0000305" key="4"/>
<gene>
    <name type="primary">sst1</name>
</gene>
<organism>
    <name type="scientific">Protopterus annectens</name>
    <name type="common">African lungfish</name>
    <dbReference type="NCBI Taxonomy" id="7888"/>
    <lineage>
        <taxon>Eukaryota</taxon>
        <taxon>Metazoa</taxon>
        <taxon>Chordata</taxon>
        <taxon>Craniata</taxon>
        <taxon>Vertebrata</taxon>
        <taxon>Euteleostomi</taxon>
        <taxon>Dipnomorpha</taxon>
        <taxon>Ceratodontiformes</taxon>
        <taxon>Lepidosirenoidei</taxon>
        <taxon>Protopteridae</taxon>
        <taxon>Protopterus</taxon>
    </lineage>
</organism>